<keyword id="KW-0963">Cytoplasm</keyword>
<keyword id="KW-0350">Heme biosynthesis</keyword>
<keyword id="KW-0479">Metal-binding</keyword>
<keyword id="KW-0560">Oxidoreductase</keyword>
<keyword id="KW-0627">Porphyrin biosynthesis</keyword>
<keyword id="KW-1185">Reference proteome</keyword>
<accession>Q3YZA7</accession>
<comment type="function">
    <text evidence="1">Involved in the heme biosynthesis. Catalyzes the aerobic oxidative decarboxylation of propionate groups of rings A and B of coproporphyrinogen-III to yield the vinyl groups in protoporphyrinogen-IX.</text>
</comment>
<comment type="catalytic activity">
    <reaction evidence="1">
        <text>coproporphyrinogen III + O2 + 2 H(+) = protoporphyrinogen IX + 2 CO2 + 2 H2O</text>
        <dbReference type="Rhea" id="RHEA:18257"/>
        <dbReference type="ChEBI" id="CHEBI:15377"/>
        <dbReference type="ChEBI" id="CHEBI:15378"/>
        <dbReference type="ChEBI" id="CHEBI:15379"/>
        <dbReference type="ChEBI" id="CHEBI:16526"/>
        <dbReference type="ChEBI" id="CHEBI:57307"/>
        <dbReference type="ChEBI" id="CHEBI:57309"/>
        <dbReference type="EC" id="1.3.3.3"/>
    </reaction>
</comment>
<comment type="cofactor">
    <cofactor evidence="1">
        <name>a divalent metal cation</name>
        <dbReference type="ChEBI" id="CHEBI:60240"/>
    </cofactor>
</comment>
<comment type="pathway">
    <text evidence="1">Porphyrin-containing compound metabolism; protoporphyrin-IX biosynthesis; protoporphyrinogen-IX from coproporphyrinogen-III (O2 route): step 1/1.</text>
</comment>
<comment type="subunit">
    <text evidence="1">Homodimer.</text>
</comment>
<comment type="subcellular location">
    <subcellularLocation>
        <location evidence="1">Cytoplasm</location>
    </subcellularLocation>
</comment>
<comment type="similarity">
    <text evidence="1">Belongs to the aerobic coproporphyrinogen-III oxidase family.</text>
</comment>
<feature type="chain" id="PRO_1000019508" description="Oxygen-dependent coproporphyrinogen-III oxidase">
    <location>
        <begin position="1"/>
        <end position="299"/>
    </location>
</feature>
<feature type="region of interest" description="Important for dimerization" evidence="1">
    <location>
        <begin position="240"/>
        <end position="275"/>
    </location>
</feature>
<feature type="active site" description="Proton donor" evidence="1">
    <location>
        <position position="106"/>
    </location>
</feature>
<feature type="binding site" evidence="1">
    <location>
        <position position="92"/>
    </location>
    <ligand>
        <name>substrate</name>
    </ligand>
</feature>
<feature type="binding site" evidence="1">
    <location>
        <position position="96"/>
    </location>
    <ligand>
        <name>a divalent metal cation</name>
        <dbReference type="ChEBI" id="CHEBI:60240"/>
    </ligand>
</feature>
<feature type="binding site" evidence="1">
    <location>
        <position position="106"/>
    </location>
    <ligand>
        <name>a divalent metal cation</name>
        <dbReference type="ChEBI" id="CHEBI:60240"/>
    </ligand>
</feature>
<feature type="binding site" evidence="1">
    <location>
        <begin position="108"/>
        <end position="110"/>
    </location>
    <ligand>
        <name>substrate</name>
    </ligand>
</feature>
<feature type="binding site" evidence="1">
    <location>
        <position position="145"/>
    </location>
    <ligand>
        <name>a divalent metal cation</name>
        <dbReference type="ChEBI" id="CHEBI:60240"/>
    </ligand>
</feature>
<feature type="binding site" evidence="1">
    <location>
        <position position="175"/>
    </location>
    <ligand>
        <name>a divalent metal cation</name>
        <dbReference type="ChEBI" id="CHEBI:60240"/>
    </ligand>
</feature>
<feature type="binding site" evidence="1">
    <location>
        <begin position="258"/>
        <end position="260"/>
    </location>
    <ligand>
        <name>substrate</name>
    </ligand>
</feature>
<feature type="site" description="Important for dimerization" evidence="1">
    <location>
        <position position="175"/>
    </location>
</feature>
<reference key="1">
    <citation type="journal article" date="2005" name="Nucleic Acids Res.">
        <title>Genome dynamics and diversity of Shigella species, the etiologic agents of bacillary dysentery.</title>
        <authorList>
            <person name="Yang F."/>
            <person name="Yang J."/>
            <person name="Zhang X."/>
            <person name="Chen L."/>
            <person name="Jiang Y."/>
            <person name="Yan Y."/>
            <person name="Tang X."/>
            <person name="Wang J."/>
            <person name="Xiong Z."/>
            <person name="Dong J."/>
            <person name="Xue Y."/>
            <person name="Zhu Y."/>
            <person name="Xu X."/>
            <person name="Sun L."/>
            <person name="Chen S."/>
            <person name="Nie H."/>
            <person name="Peng J."/>
            <person name="Xu J."/>
            <person name="Wang Y."/>
            <person name="Yuan Z."/>
            <person name="Wen Y."/>
            <person name="Yao Z."/>
            <person name="Shen Y."/>
            <person name="Qiang B."/>
            <person name="Hou Y."/>
            <person name="Yu J."/>
            <person name="Jin Q."/>
        </authorList>
    </citation>
    <scope>NUCLEOTIDE SEQUENCE [LARGE SCALE GENOMIC DNA]</scope>
    <source>
        <strain>Ss046</strain>
    </source>
</reference>
<dbReference type="EC" id="1.3.3.3" evidence="1"/>
<dbReference type="EMBL" id="CP000038">
    <property type="protein sequence ID" value="AAZ89155.1"/>
    <property type="molecule type" value="Genomic_DNA"/>
</dbReference>
<dbReference type="RefSeq" id="WP_000801367.1">
    <property type="nucleotide sequence ID" value="NC_007384.1"/>
</dbReference>
<dbReference type="SMR" id="Q3YZA7"/>
<dbReference type="GeneID" id="93774695"/>
<dbReference type="KEGG" id="ssn:SSON_2525"/>
<dbReference type="HOGENOM" id="CLU_026169_0_1_6"/>
<dbReference type="UniPathway" id="UPA00251">
    <property type="reaction ID" value="UER00322"/>
</dbReference>
<dbReference type="Proteomes" id="UP000002529">
    <property type="component" value="Chromosome"/>
</dbReference>
<dbReference type="GO" id="GO:0005737">
    <property type="term" value="C:cytoplasm"/>
    <property type="evidence" value="ECO:0007669"/>
    <property type="project" value="UniProtKB-SubCell"/>
</dbReference>
<dbReference type="GO" id="GO:0004109">
    <property type="term" value="F:coproporphyrinogen oxidase activity"/>
    <property type="evidence" value="ECO:0007669"/>
    <property type="project" value="UniProtKB-UniRule"/>
</dbReference>
<dbReference type="GO" id="GO:0046872">
    <property type="term" value="F:metal ion binding"/>
    <property type="evidence" value="ECO:0007669"/>
    <property type="project" value="UniProtKB-KW"/>
</dbReference>
<dbReference type="GO" id="GO:0042803">
    <property type="term" value="F:protein homodimerization activity"/>
    <property type="evidence" value="ECO:0000250"/>
    <property type="project" value="UniProtKB"/>
</dbReference>
<dbReference type="GO" id="GO:0006782">
    <property type="term" value="P:protoporphyrinogen IX biosynthetic process"/>
    <property type="evidence" value="ECO:0007669"/>
    <property type="project" value="UniProtKB-UniRule"/>
</dbReference>
<dbReference type="FunFam" id="3.40.1500.10:FF:000001">
    <property type="entry name" value="Oxygen-dependent coproporphyrinogen-III oxidase"/>
    <property type="match status" value="1"/>
</dbReference>
<dbReference type="Gene3D" id="3.40.1500.10">
    <property type="entry name" value="Coproporphyrinogen III oxidase, aerobic"/>
    <property type="match status" value="1"/>
</dbReference>
<dbReference type="HAMAP" id="MF_00333">
    <property type="entry name" value="Coprogen_oxidas"/>
    <property type="match status" value="1"/>
</dbReference>
<dbReference type="InterPro" id="IPR001260">
    <property type="entry name" value="Coprogen_oxidase_aer"/>
</dbReference>
<dbReference type="InterPro" id="IPR036406">
    <property type="entry name" value="Coprogen_oxidase_aer_sf"/>
</dbReference>
<dbReference type="InterPro" id="IPR018375">
    <property type="entry name" value="Coprogen_oxidase_CS"/>
</dbReference>
<dbReference type="NCBIfam" id="NF003727">
    <property type="entry name" value="PRK05330.1"/>
    <property type="match status" value="1"/>
</dbReference>
<dbReference type="PANTHER" id="PTHR10755">
    <property type="entry name" value="COPROPORPHYRINOGEN III OXIDASE, MITOCHONDRIAL"/>
    <property type="match status" value="1"/>
</dbReference>
<dbReference type="PANTHER" id="PTHR10755:SF0">
    <property type="entry name" value="OXYGEN-DEPENDENT COPROPORPHYRINOGEN-III OXIDASE, MITOCHONDRIAL"/>
    <property type="match status" value="1"/>
</dbReference>
<dbReference type="Pfam" id="PF01218">
    <property type="entry name" value="Coprogen_oxidas"/>
    <property type="match status" value="1"/>
</dbReference>
<dbReference type="PIRSF" id="PIRSF000166">
    <property type="entry name" value="Coproporphyri_ox"/>
    <property type="match status" value="1"/>
</dbReference>
<dbReference type="PRINTS" id="PR00073">
    <property type="entry name" value="COPRGNOXDASE"/>
</dbReference>
<dbReference type="SUPFAM" id="SSF102886">
    <property type="entry name" value="Coproporphyrinogen III oxidase"/>
    <property type="match status" value="1"/>
</dbReference>
<dbReference type="PROSITE" id="PS01021">
    <property type="entry name" value="COPROGEN_OXIDASE"/>
    <property type="match status" value="1"/>
</dbReference>
<gene>
    <name evidence="1" type="primary">hemF</name>
    <name type="ordered locus">SSON_2525</name>
</gene>
<evidence type="ECO:0000255" key="1">
    <source>
        <dbReference type="HAMAP-Rule" id="MF_00333"/>
    </source>
</evidence>
<protein>
    <recommendedName>
        <fullName evidence="1">Oxygen-dependent coproporphyrinogen-III oxidase</fullName>
        <shortName evidence="1">CPO</shortName>
        <shortName evidence="1">Coprogen oxidase</shortName>
        <shortName evidence="1">Coproporphyrinogenase</shortName>
        <ecNumber evidence="1">1.3.3.3</ecNumber>
    </recommendedName>
</protein>
<proteinExistence type="inferred from homology"/>
<organism>
    <name type="scientific">Shigella sonnei (strain Ss046)</name>
    <dbReference type="NCBI Taxonomy" id="300269"/>
    <lineage>
        <taxon>Bacteria</taxon>
        <taxon>Pseudomonadati</taxon>
        <taxon>Pseudomonadota</taxon>
        <taxon>Gammaproteobacteria</taxon>
        <taxon>Enterobacterales</taxon>
        <taxon>Enterobacteriaceae</taxon>
        <taxon>Shigella</taxon>
    </lineage>
</organism>
<name>HEM6_SHISS</name>
<sequence length="299" mass="34304">MKPDAHQVKQFLLNLQDTICQQLTAVDGAEFVEDSWQREAGGGGRSRVLRNGGVFEQAGVNFSHVHGEAMPASATAHRPELAGRSFEAMGVSLVVHPHNPYVPTSHANVRFFIAEKPGAEPVWWFGGGFDLTPFYGFEEDAIHWHRTARDLCLPFGEDVYPRYKKWCDDYFYLKHRNEQRGIGGLFFDDLNTPDFDHCFAFMQAVGKGYTDAYLPIVERRKAMAYGERERNFQLYRRGRYVEFNLVWDRGTLFGLQTGGRTESILMSMPPLVRWEYDYQPKDGSPEAALSEFIKVRDWV</sequence>